<proteinExistence type="inferred from homology"/>
<gene>
    <name type="primary">fbp1</name>
    <name type="ORF">SPBC1198.14c</name>
    <name type="ORF">SPBC660.04c</name>
</gene>
<keyword id="KW-0021">Allosteric enzyme</keyword>
<keyword id="KW-0119">Carbohydrate metabolism</keyword>
<keyword id="KW-0378">Hydrolase</keyword>
<keyword id="KW-0460">Magnesium</keyword>
<keyword id="KW-0479">Metal-binding</keyword>
<keyword id="KW-1185">Reference proteome</keyword>
<feature type="chain" id="PRO_0000200510" description="Fructose-1,6-bisphosphatase">
    <location>
        <begin position="1"/>
        <end position="347"/>
    </location>
</feature>
<feature type="binding site" evidence="2">
    <location>
        <begin position="19"/>
        <end position="23"/>
    </location>
    <ligand>
        <name>AMP</name>
        <dbReference type="ChEBI" id="CHEBI:456215"/>
    </ligand>
</feature>
<feature type="binding site" evidence="2">
    <location>
        <begin position="44"/>
        <end position="48"/>
    </location>
    <ligand>
        <name>AMP</name>
        <dbReference type="ChEBI" id="CHEBI:456215"/>
    </ligand>
</feature>
<feature type="binding site" evidence="2">
    <location>
        <position position="85"/>
    </location>
    <ligand>
        <name>Mg(2+)</name>
        <dbReference type="ChEBI" id="CHEBI:18420"/>
        <label>1</label>
    </ligand>
</feature>
<feature type="binding site" evidence="2">
    <location>
        <position position="114"/>
    </location>
    <ligand>
        <name>Mg(2+)</name>
        <dbReference type="ChEBI" id="CHEBI:18420"/>
        <label>1</label>
    </ligand>
</feature>
<feature type="binding site" evidence="2">
    <location>
        <position position="114"/>
    </location>
    <ligand>
        <name>Mg(2+)</name>
        <dbReference type="ChEBI" id="CHEBI:18420"/>
        <label>2</label>
    </ligand>
</feature>
<feature type="binding site" evidence="2">
    <location>
        <begin position="127"/>
        <end position="128"/>
    </location>
    <ligand>
        <name>AMP</name>
        <dbReference type="ChEBI" id="CHEBI:456215"/>
    </ligand>
</feature>
<feature type="binding site" evidence="2">
    <location>
        <position position="133"/>
    </location>
    <ligand>
        <name>Mg(2+)</name>
        <dbReference type="ChEBI" id="CHEBI:18420"/>
        <label>2</label>
    </ligand>
</feature>
<feature type="binding site" evidence="2">
    <location>
        <position position="133"/>
    </location>
    <ligand>
        <name>Mg(2+)</name>
        <dbReference type="ChEBI" id="CHEBI:18420"/>
        <label>3</label>
    </ligand>
</feature>
<feature type="binding site" evidence="2">
    <location>
        <position position="135"/>
    </location>
    <ligand>
        <name>Mg(2+)</name>
        <dbReference type="ChEBI" id="CHEBI:18420"/>
        <label>2</label>
    </ligand>
</feature>
<feature type="binding site" evidence="2">
    <location>
        <begin position="136"/>
        <end position="139"/>
    </location>
    <ligand>
        <name>substrate</name>
    </ligand>
</feature>
<feature type="binding site" evidence="2">
    <location>
        <position position="136"/>
    </location>
    <ligand>
        <name>Mg(2+)</name>
        <dbReference type="ChEBI" id="CHEBI:18420"/>
        <label>3</label>
    </ligand>
</feature>
<feature type="binding site" evidence="2">
    <location>
        <position position="155"/>
    </location>
    <ligand>
        <name>AMP</name>
        <dbReference type="ChEBI" id="CHEBI:456215"/>
    </ligand>
</feature>
<feature type="binding site" evidence="2">
    <location>
        <begin position="227"/>
        <end position="230"/>
    </location>
    <ligand>
        <name>substrate</name>
    </ligand>
</feature>
<feature type="binding site" evidence="2">
    <location>
        <begin position="258"/>
        <end position="263"/>
    </location>
    <ligand>
        <name>substrate</name>
    </ligand>
</feature>
<feature type="binding site" evidence="2">
    <location>
        <position position="279"/>
    </location>
    <ligand>
        <name>substrate</name>
    </ligand>
</feature>
<feature type="binding site" evidence="2">
    <location>
        <begin position="288"/>
        <end position="290"/>
    </location>
    <ligand>
        <name>substrate</name>
    </ligand>
</feature>
<feature type="binding site" evidence="2">
    <location>
        <position position="294"/>
    </location>
    <ligand>
        <name>Mg(2+)</name>
        <dbReference type="ChEBI" id="CHEBI:18420"/>
        <label>3</label>
    </ligand>
</feature>
<comment type="catalytic activity">
    <reaction>
        <text>beta-D-fructose 1,6-bisphosphate + H2O = beta-D-fructose 6-phosphate + phosphate</text>
        <dbReference type="Rhea" id="RHEA:11064"/>
        <dbReference type="ChEBI" id="CHEBI:15377"/>
        <dbReference type="ChEBI" id="CHEBI:32966"/>
        <dbReference type="ChEBI" id="CHEBI:43474"/>
        <dbReference type="ChEBI" id="CHEBI:57634"/>
        <dbReference type="EC" id="3.1.3.11"/>
    </reaction>
</comment>
<comment type="cofactor">
    <cofactor evidence="2">
        <name>Mg(2+)</name>
        <dbReference type="ChEBI" id="CHEBI:18420"/>
    </cofactor>
    <text evidence="2">Binds 3 Mg(2+) ions per subunit.</text>
</comment>
<comment type="activity regulation">
    <text evidence="1">Subject to complex allosteric regulation. The enzyme can assume an active R-state, or an inactive T-state. Intermediate conformations may exist. AMP acts as allosteric inhibitor. AMP binding affects the turnover of bound substrate and not the affinity for substrate (By similarity).</text>
</comment>
<comment type="pathway">
    <text>Carbohydrate biosynthesis; gluconeogenesis.</text>
</comment>
<comment type="subunit">
    <text evidence="2">Homotetramer.</text>
</comment>
<comment type="similarity">
    <text evidence="3">Belongs to the FBPase class 1 family.</text>
</comment>
<accession>P09202</accession>
<accession>Q9P6H8</accession>
<evidence type="ECO:0000250" key="1"/>
<evidence type="ECO:0000250" key="2">
    <source>
        <dbReference type="UniProtKB" id="P00636"/>
    </source>
</evidence>
<evidence type="ECO:0000305" key="3"/>
<sequence length="347" mass="38525">MKKDLDEIDTDIVTLSSFILQEQRRYNQKHKNEEGKPCIIQEASGELSLLLNSLQFSFKFIANTIRKAELVNLIGLSGIVNSTGDEQKKLDKICNDIFITAMKSNGCCKLIVSEEEEDLIVVDSNGSYAVTCDPIDGSSNIDAGVSVGTIFGIYKLRPGSQGDISDVLRPGKEMVAAGYTMYGASAHLLLTTGHRVNGFTLDTDIGEFILTHRNMKMPLQHSIYSINEGYTAFWDEKIARFIAHLKESTPDKKPYSARYIGSMVADMHRTILYGGLFAYPCSKGNNGKLRLLYECFPMAFLVEQAGGIAVNDKGDRILDLVPKTLHGKSSIWLGSKHEVEEYINFIK</sequence>
<dbReference type="EC" id="3.1.3.11"/>
<dbReference type="EMBL" id="J03213">
    <property type="protein sequence ID" value="AAA35304.1"/>
    <property type="molecule type" value="Genomic_DNA"/>
</dbReference>
<dbReference type="EMBL" id="CU329671">
    <property type="protein sequence ID" value="CAB91189.2"/>
    <property type="molecule type" value="Genomic_DNA"/>
</dbReference>
<dbReference type="PIR" id="T43294">
    <property type="entry name" value="B28653"/>
</dbReference>
<dbReference type="RefSeq" id="NP_595083.2">
    <property type="nucleotide sequence ID" value="NM_001020990.3"/>
</dbReference>
<dbReference type="SMR" id="P09202"/>
<dbReference type="BioGRID" id="276574">
    <property type="interactions" value="33"/>
</dbReference>
<dbReference type="FunCoup" id="P09202">
    <property type="interactions" value="506"/>
</dbReference>
<dbReference type="STRING" id="284812.P09202"/>
<dbReference type="PaxDb" id="4896-SPBC1198.14c.1"/>
<dbReference type="EnsemblFungi" id="SPBC1198.14c.1">
    <property type="protein sequence ID" value="SPBC1198.14c.1:pep"/>
    <property type="gene ID" value="SPBC1198.14c"/>
</dbReference>
<dbReference type="GeneID" id="2540031"/>
<dbReference type="KEGG" id="spo:2540031"/>
<dbReference type="PomBase" id="SPBC1198.14c">
    <property type="gene designation" value="fbp1"/>
</dbReference>
<dbReference type="VEuPathDB" id="FungiDB:SPBC1198.14c"/>
<dbReference type="eggNOG" id="KOG1458">
    <property type="taxonomic scope" value="Eukaryota"/>
</dbReference>
<dbReference type="HOGENOM" id="CLU_039977_1_0_1"/>
<dbReference type="InParanoid" id="P09202"/>
<dbReference type="OMA" id="YIPENCP"/>
<dbReference type="PhylomeDB" id="P09202"/>
<dbReference type="Reactome" id="R-SPO-70263">
    <property type="pathway name" value="Gluconeogenesis"/>
</dbReference>
<dbReference type="UniPathway" id="UPA00138"/>
<dbReference type="PRO" id="PR:P09202"/>
<dbReference type="Proteomes" id="UP000002485">
    <property type="component" value="Chromosome II"/>
</dbReference>
<dbReference type="GO" id="GO:0005737">
    <property type="term" value="C:cytoplasm"/>
    <property type="evidence" value="ECO:0000318"/>
    <property type="project" value="GO_Central"/>
</dbReference>
<dbReference type="GO" id="GO:0005829">
    <property type="term" value="C:cytosol"/>
    <property type="evidence" value="ECO:0007005"/>
    <property type="project" value="PomBase"/>
</dbReference>
<dbReference type="GO" id="GO:0005634">
    <property type="term" value="C:nucleus"/>
    <property type="evidence" value="ECO:0007005"/>
    <property type="project" value="PomBase"/>
</dbReference>
<dbReference type="GO" id="GO:0042132">
    <property type="term" value="F:fructose 1,6-bisphosphate 1-phosphatase activity"/>
    <property type="evidence" value="ECO:0000315"/>
    <property type="project" value="PomBase"/>
</dbReference>
<dbReference type="GO" id="GO:0046872">
    <property type="term" value="F:metal ion binding"/>
    <property type="evidence" value="ECO:0007669"/>
    <property type="project" value="UniProtKB-KW"/>
</dbReference>
<dbReference type="GO" id="GO:0042149">
    <property type="term" value="P:cellular response to glucose starvation"/>
    <property type="evidence" value="ECO:0000314"/>
    <property type="project" value="PomBase"/>
</dbReference>
<dbReference type="GO" id="GO:0030388">
    <property type="term" value="P:fructose 1,6-bisphosphate metabolic process"/>
    <property type="evidence" value="ECO:0000318"/>
    <property type="project" value="GO_Central"/>
</dbReference>
<dbReference type="GO" id="GO:0006002">
    <property type="term" value="P:fructose 6-phosphate metabolic process"/>
    <property type="evidence" value="ECO:0000318"/>
    <property type="project" value="GO_Central"/>
</dbReference>
<dbReference type="GO" id="GO:0006000">
    <property type="term" value="P:fructose metabolic process"/>
    <property type="evidence" value="ECO:0000318"/>
    <property type="project" value="GO_Central"/>
</dbReference>
<dbReference type="GO" id="GO:0006094">
    <property type="term" value="P:gluconeogenesis"/>
    <property type="evidence" value="ECO:0000318"/>
    <property type="project" value="GO_Central"/>
</dbReference>
<dbReference type="CDD" id="cd00354">
    <property type="entry name" value="FBPase"/>
    <property type="match status" value="1"/>
</dbReference>
<dbReference type="FunFam" id="3.30.540.10:FF:000002">
    <property type="entry name" value="Fructose-1,6-bisphosphatase class 1"/>
    <property type="match status" value="1"/>
</dbReference>
<dbReference type="FunFam" id="3.40.190.80:FF:000001">
    <property type="entry name" value="Fructose-1,6-bisphosphatase class 1"/>
    <property type="match status" value="1"/>
</dbReference>
<dbReference type="Gene3D" id="3.40.190.80">
    <property type="match status" value="1"/>
</dbReference>
<dbReference type="Gene3D" id="3.30.540.10">
    <property type="entry name" value="Fructose-1,6-Bisphosphatase, subunit A, domain 1"/>
    <property type="match status" value="1"/>
</dbReference>
<dbReference type="HAMAP" id="MF_01855">
    <property type="entry name" value="FBPase_class1"/>
    <property type="match status" value="1"/>
</dbReference>
<dbReference type="InterPro" id="IPR044015">
    <property type="entry name" value="FBPase_C_dom"/>
</dbReference>
<dbReference type="InterPro" id="IPR000146">
    <property type="entry name" value="FBPase_class-1"/>
</dbReference>
<dbReference type="InterPro" id="IPR033391">
    <property type="entry name" value="FBPase_N"/>
</dbReference>
<dbReference type="InterPro" id="IPR028343">
    <property type="entry name" value="FBPtase"/>
</dbReference>
<dbReference type="InterPro" id="IPR020548">
    <property type="entry name" value="Fructose_bisphosphatase_AS"/>
</dbReference>
<dbReference type="PANTHER" id="PTHR11556">
    <property type="entry name" value="FRUCTOSE-1,6-BISPHOSPHATASE-RELATED"/>
    <property type="match status" value="1"/>
</dbReference>
<dbReference type="PANTHER" id="PTHR11556:SF1">
    <property type="entry name" value="FRUCTOSE-BISPHOSPHATASE"/>
    <property type="match status" value="1"/>
</dbReference>
<dbReference type="Pfam" id="PF00316">
    <property type="entry name" value="FBPase"/>
    <property type="match status" value="1"/>
</dbReference>
<dbReference type="Pfam" id="PF18913">
    <property type="entry name" value="FBPase_C"/>
    <property type="match status" value="1"/>
</dbReference>
<dbReference type="PIRSF" id="PIRSF500210">
    <property type="entry name" value="FBPtase"/>
    <property type="match status" value="1"/>
</dbReference>
<dbReference type="PIRSF" id="PIRSF000904">
    <property type="entry name" value="FBPtase_SBPase"/>
    <property type="match status" value="1"/>
</dbReference>
<dbReference type="PRINTS" id="PR00115">
    <property type="entry name" value="F16BPHPHTASE"/>
</dbReference>
<dbReference type="SUPFAM" id="SSF56655">
    <property type="entry name" value="Carbohydrate phosphatase"/>
    <property type="match status" value="1"/>
</dbReference>
<dbReference type="PROSITE" id="PS00124">
    <property type="entry name" value="FBPASE"/>
    <property type="match status" value="1"/>
</dbReference>
<name>F16P_SCHPO</name>
<organism>
    <name type="scientific">Schizosaccharomyces pombe (strain 972 / ATCC 24843)</name>
    <name type="common">Fission yeast</name>
    <dbReference type="NCBI Taxonomy" id="284812"/>
    <lineage>
        <taxon>Eukaryota</taxon>
        <taxon>Fungi</taxon>
        <taxon>Dikarya</taxon>
        <taxon>Ascomycota</taxon>
        <taxon>Taphrinomycotina</taxon>
        <taxon>Schizosaccharomycetes</taxon>
        <taxon>Schizosaccharomycetales</taxon>
        <taxon>Schizosaccharomycetaceae</taxon>
        <taxon>Schizosaccharomyces</taxon>
    </lineage>
</organism>
<protein>
    <recommendedName>
        <fullName>Fructose-1,6-bisphosphatase</fullName>
        <shortName>FBPase</shortName>
        <ecNumber>3.1.3.11</ecNumber>
    </recommendedName>
    <alternativeName>
        <fullName>D-fructose-1,6-bisphosphate 1-phosphohydrolase</fullName>
    </alternativeName>
</protein>
<reference key="1">
    <citation type="journal article" date="1988" name="J. Biol. Chem.">
        <title>Characterization of the gene for fructose-1,6-bisphosphatase from Saccharomyces cerevisiae and Schizosaccharomyces pombe. Sequence, protein homology, and expression during growth on glucose.</title>
        <authorList>
            <person name="Rogers D.T."/>
            <person name="Hiller E."/>
            <person name="Mitsock L."/>
            <person name="Orr E."/>
        </authorList>
    </citation>
    <scope>NUCLEOTIDE SEQUENCE [GENOMIC DNA]</scope>
</reference>
<reference key="2">
    <citation type="journal article" date="2002" name="Nature">
        <title>The genome sequence of Schizosaccharomyces pombe.</title>
        <authorList>
            <person name="Wood V."/>
            <person name="Gwilliam R."/>
            <person name="Rajandream M.A."/>
            <person name="Lyne M.H."/>
            <person name="Lyne R."/>
            <person name="Stewart A."/>
            <person name="Sgouros J.G."/>
            <person name="Peat N."/>
            <person name="Hayles J."/>
            <person name="Baker S.G."/>
            <person name="Basham D."/>
            <person name="Bowman S."/>
            <person name="Brooks K."/>
            <person name="Brown D."/>
            <person name="Brown S."/>
            <person name="Chillingworth T."/>
            <person name="Churcher C.M."/>
            <person name="Collins M."/>
            <person name="Connor R."/>
            <person name="Cronin A."/>
            <person name="Davis P."/>
            <person name="Feltwell T."/>
            <person name="Fraser A."/>
            <person name="Gentles S."/>
            <person name="Goble A."/>
            <person name="Hamlin N."/>
            <person name="Harris D.E."/>
            <person name="Hidalgo J."/>
            <person name="Hodgson G."/>
            <person name="Holroyd S."/>
            <person name="Hornsby T."/>
            <person name="Howarth S."/>
            <person name="Huckle E.J."/>
            <person name="Hunt S."/>
            <person name="Jagels K."/>
            <person name="James K.D."/>
            <person name="Jones L."/>
            <person name="Jones M."/>
            <person name="Leather S."/>
            <person name="McDonald S."/>
            <person name="McLean J."/>
            <person name="Mooney P."/>
            <person name="Moule S."/>
            <person name="Mungall K.L."/>
            <person name="Murphy L.D."/>
            <person name="Niblett D."/>
            <person name="Odell C."/>
            <person name="Oliver K."/>
            <person name="O'Neil S."/>
            <person name="Pearson D."/>
            <person name="Quail M.A."/>
            <person name="Rabbinowitsch E."/>
            <person name="Rutherford K.M."/>
            <person name="Rutter S."/>
            <person name="Saunders D."/>
            <person name="Seeger K."/>
            <person name="Sharp S."/>
            <person name="Skelton J."/>
            <person name="Simmonds M.N."/>
            <person name="Squares R."/>
            <person name="Squares S."/>
            <person name="Stevens K."/>
            <person name="Taylor K."/>
            <person name="Taylor R.G."/>
            <person name="Tivey A."/>
            <person name="Walsh S.V."/>
            <person name="Warren T."/>
            <person name="Whitehead S."/>
            <person name="Woodward J.R."/>
            <person name="Volckaert G."/>
            <person name="Aert R."/>
            <person name="Robben J."/>
            <person name="Grymonprez B."/>
            <person name="Weltjens I."/>
            <person name="Vanstreels E."/>
            <person name="Rieger M."/>
            <person name="Schaefer M."/>
            <person name="Mueller-Auer S."/>
            <person name="Gabel C."/>
            <person name="Fuchs M."/>
            <person name="Duesterhoeft A."/>
            <person name="Fritzc C."/>
            <person name="Holzer E."/>
            <person name="Moestl D."/>
            <person name="Hilbert H."/>
            <person name="Borzym K."/>
            <person name="Langer I."/>
            <person name="Beck A."/>
            <person name="Lehrach H."/>
            <person name="Reinhardt R."/>
            <person name="Pohl T.M."/>
            <person name="Eger P."/>
            <person name="Zimmermann W."/>
            <person name="Wedler H."/>
            <person name="Wambutt R."/>
            <person name="Purnelle B."/>
            <person name="Goffeau A."/>
            <person name="Cadieu E."/>
            <person name="Dreano S."/>
            <person name="Gloux S."/>
            <person name="Lelaure V."/>
            <person name="Mottier S."/>
            <person name="Galibert F."/>
            <person name="Aves S.J."/>
            <person name="Xiang Z."/>
            <person name="Hunt C."/>
            <person name="Moore K."/>
            <person name="Hurst S.M."/>
            <person name="Lucas M."/>
            <person name="Rochet M."/>
            <person name="Gaillardin C."/>
            <person name="Tallada V.A."/>
            <person name="Garzon A."/>
            <person name="Thode G."/>
            <person name="Daga R.R."/>
            <person name="Cruzado L."/>
            <person name="Jimenez J."/>
            <person name="Sanchez M."/>
            <person name="del Rey F."/>
            <person name="Benito J."/>
            <person name="Dominguez A."/>
            <person name="Revuelta J.L."/>
            <person name="Moreno S."/>
            <person name="Armstrong J."/>
            <person name="Forsburg S.L."/>
            <person name="Cerutti L."/>
            <person name="Lowe T."/>
            <person name="McCombie W.R."/>
            <person name="Paulsen I."/>
            <person name="Potashkin J."/>
            <person name="Shpakovski G.V."/>
            <person name="Ussery D."/>
            <person name="Barrell B.G."/>
            <person name="Nurse P."/>
        </authorList>
    </citation>
    <scope>NUCLEOTIDE SEQUENCE [LARGE SCALE GENOMIC DNA]</scope>
    <source>
        <strain>972 / ATCC 24843</strain>
    </source>
</reference>